<proteinExistence type="inferred from homology"/>
<keyword id="KW-0963">Cytoplasm</keyword>
<keyword id="KW-0238">DNA-binding</keyword>
<organism>
    <name type="scientific">Streptococcus pyogenes serotype M3 (strain ATCC BAA-595 / MGAS315)</name>
    <dbReference type="NCBI Taxonomy" id="198466"/>
    <lineage>
        <taxon>Bacteria</taxon>
        <taxon>Bacillati</taxon>
        <taxon>Bacillota</taxon>
        <taxon>Bacilli</taxon>
        <taxon>Lactobacillales</taxon>
        <taxon>Streptococcaceae</taxon>
        <taxon>Streptococcus</taxon>
    </lineage>
</organism>
<feature type="chain" id="PRO_0000170451" description="Nucleoid-associated protein SpyM3_1606">
    <location>
        <begin position="1"/>
        <end position="99"/>
    </location>
</feature>
<protein>
    <recommendedName>
        <fullName evidence="1">Nucleoid-associated protein SpyM3_1606</fullName>
    </recommendedName>
</protein>
<comment type="function">
    <text evidence="1">Binds to DNA and alters its conformation. May be involved in regulation of gene expression, nucleoid organization and DNA protection.</text>
</comment>
<comment type="subunit">
    <text evidence="1">Homodimer.</text>
</comment>
<comment type="subcellular location">
    <subcellularLocation>
        <location evidence="1">Cytoplasm</location>
        <location evidence="1">Nucleoid</location>
    </subcellularLocation>
</comment>
<comment type="similarity">
    <text evidence="1">Belongs to the YbaB/EbfC family.</text>
</comment>
<name>Y1606_STRP3</name>
<gene>
    <name type="ordered locus">SpyM3_1606</name>
</gene>
<reference key="1">
    <citation type="journal article" date="2002" name="Proc. Natl. Acad. Sci. U.S.A.">
        <title>Genome sequence of a serotype M3 strain of group A Streptococcus: phage-encoded toxins, the high-virulence phenotype, and clone emergence.</title>
        <authorList>
            <person name="Beres S.B."/>
            <person name="Sylva G.L."/>
            <person name="Barbian K.D."/>
            <person name="Lei B."/>
            <person name="Hoff J.S."/>
            <person name="Mammarella N.D."/>
            <person name="Liu M.-Y."/>
            <person name="Smoot J.C."/>
            <person name="Porcella S.F."/>
            <person name="Parkins L.D."/>
            <person name="Campbell D.S."/>
            <person name="Smith T.M."/>
            <person name="McCormick J.K."/>
            <person name="Leung D.Y.M."/>
            <person name="Schlievert P.M."/>
            <person name="Musser J.M."/>
        </authorList>
    </citation>
    <scope>NUCLEOTIDE SEQUENCE [LARGE SCALE GENOMIC DNA]</scope>
    <source>
        <strain>ATCC BAA-595 / MGAS315</strain>
    </source>
</reference>
<sequence>MMNMQNMMRQAQKLQKQMEQKQADLAAMQFTGKSAQDLVTATFTGDKKLVGIDFKEAVVDPEDVETLQDMTTQAINDALTQIDEATKKTLGAFAGKLPF</sequence>
<accession>P0DG82</accession>
<accession>Q8K5X6</accession>
<evidence type="ECO:0000255" key="1">
    <source>
        <dbReference type="HAMAP-Rule" id="MF_00274"/>
    </source>
</evidence>
<dbReference type="EMBL" id="AE014074">
    <property type="protein sequence ID" value="AAM80213.1"/>
    <property type="molecule type" value="Genomic_DNA"/>
</dbReference>
<dbReference type="RefSeq" id="WP_002992264.1">
    <property type="nucleotide sequence ID" value="NC_004070.1"/>
</dbReference>
<dbReference type="SMR" id="P0DG82"/>
<dbReference type="KEGG" id="spg:SpyM3_1606"/>
<dbReference type="HOGENOM" id="CLU_140930_1_1_9"/>
<dbReference type="Proteomes" id="UP000000564">
    <property type="component" value="Chromosome"/>
</dbReference>
<dbReference type="GO" id="GO:0043590">
    <property type="term" value="C:bacterial nucleoid"/>
    <property type="evidence" value="ECO:0007669"/>
    <property type="project" value="UniProtKB-UniRule"/>
</dbReference>
<dbReference type="GO" id="GO:0005829">
    <property type="term" value="C:cytosol"/>
    <property type="evidence" value="ECO:0007669"/>
    <property type="project" value="TreeGrafter"/>
</dbReference>
<dbReference type="GO" id="GO:0003677">
    <property type="term" value="F:DNA binding"/>
    <property type="evidence" value="ECO:0007669"/>
    <property type="project" value="UniProtKB-UniRule"/>
</dbReference>
<dbReference type="Gene3D" id="3.30.1310.10">
    <property type="entry name" value="Nucleoid-associated protein YbaB-like domain"/>
    <property type="match status" value="1"/>
</dbReference>
<dbReference type="HAMAP" id="MF_00274">
    <property type="entry name" value="DNA_YbaB_EbfC"/>
    <property type="match status" value="1"/>
</dbReference>
<dbReference type="InterPro" id="IPR036894">
    <property type="entry name" value="YbaB-like_sf"/>
</dbReference>
<dbReference type="InterPro" id="IPR004401">
    <property type="entry name" value="YbaB/EbfC"/>
</dbReference>
<dbReference type="NCBIfam" id="TIGR00103">
    <property type="entry name" value="DNA_YbaB_EbfC"/>
    <property type="match status" value="1"/>
</dbReference>
<dbReference type="PANTHER" id="PTHR33449">
    <property type="entry name" value="NUCLEOID-ASSOCIATED PROTEIN YBAB"/>
    <property type="match status" value="1"/>
</dbReference>
<dbReference type="PANTHER" id="PTHR33449:SF1">
    <property type="entry name" value="NUCLEOID-ASSOCIATED PROTEIN YBAB"/>
    <property type="match status" value="1"/>
</dbReference>
<dbReference type="Pfam" id="PF02575">
    <property type="entry name" value="YbaB_DNA_bd"/>
    <property type="match status" value="1"/>
</dbReference>
<dbReference type="PIRSF" id="PIRSF004555">
    <property type="entry name" value="UCP004555"/>
    <property type="match status" value="1"/>
</dbReference>
<dbReference type="SUPFAM" id="SSF82607">
    <property type="entry name" value="YbaB-like"/>
    <property type="match status" value="1"/>
</dbReference>